<keyword id="KW-1003">Cell membrane</keyword>
<keyword id="KW-0169">Cobalamin biosynthesis</keyword>
<keyword id="KW-0170">Cobalt</keyword>
<keyword id="KW-0171">Cobalt transport</keyword>
<keyword id="KW-0406">Ion transport</keyword>
<keyword id="KW-0472">Membrane</keyword>
<keyword id="KW-1185">Reference proteome</keyword>
<keyword id="KW-0732">Signal</keyword>
<keyword id="KW-0812">Transmembrane</keyword>
<keyword id="KW-1133">Transmembrane helix</keyword>
<keyword id="KW-0813">Transport</keyword>
<gene>
    <name evidence="1" type="primary">cbiM</name>
    <name type="ordered locus">Dred_2731</name>
</gene>
<evidence type="ECO:0000255" key="1">
    <source>
        <dbReference type="HAMAP-Rule" id="MF_01462"/>
    </source>
</evidence>
<sequence length="250" mass="27124">MKYWGTALLGAFCVFFFTPNTAYAMHIAEGFLPAGWCLFWLALSVPFVFWGIRSIHISLRGNPHLKMLLGLAGAFVFVLSALKIPSVTGSCSHPTGVGLGAILFGPAVMSVLGCIVLLFQALLLAHGGITTLGANVFSMGVMGPLVSYGVYQLLKKRNTKVAVFLAASLGNMTTYMVTSLQLAMAFPDKTGNLLVSFFKFMSIFAITQIPLAITEGLLTVFVFNLLNNYREELYPGLPKEERSGPYDFVN</sequence>
<dbReference type="EMBL" id="CP000612">
    <property type="protein sequence ID" value="ABO51235.1"/>
    <property type="molecule type" value="Genomic_DNA"/>
</dbReference>
<dbReference type="RefSeq" id="WP_011879032.1">
    <property type="nucleotide sequence ID" value="NC_009253.1"/>
</dbReference>
<dbReference type="SMR" id="A4J832"/>
<dbReference type="STRING" id="349161.Dred_2731"/>
<dbReference type="KEGG" id="drm:Dred_2731"/>
<dbReference type="eggNOG" id="COG0310">
    <property type="taxonomic scope" value="Bacteria"/>
</dbReference>
<dbReference type="HOGENOM" id="CLU_052508_3_0_9"/>
<dbReference type="OrthoDB" id="9809846at2"/>
<dbReference type="UniPathway" id="UPA00148"/>
<dbReference type="Proteomes" id="UP000001556">
    <property type="component" value="Chromosome"/>
</dbReference>
<dbReference type="GO" id="GO:0043190">
    <property type="term" value="C:ATP-binding cassette (ABC) transporter complex"/>
    <property type="evidence" value="ECO:0007669"/>
    <property type="project" value="InterPro"/>
</dbReference>
<dbReference type="GO" id="GO:0015087">
    <property type="term" value="F:cobalt ion transmembrane transporter activity"/>
    <property type="evidence" value="ECO:0007669"/>
    <property type="project" value="UniProtKB-UniRule"/>
</dbReference>
<dbReference type="GO" id="GO:0009236">
    <property type="term" value="P:cobalamin biosynthetic process"/>
    <property type="evidence" value="ECO:0007669"/>
    <property type="project" value="UniProtKB-UniRule"/>
</dbReference>
<dbReference type="FunFam" id="1.10.1760.20:FF:000001">
    <property type="entry name" value="Cobalt transport protein CbiM"/>
    <property type="match status" value="1"/>
</dbReference>
<dbReference type="Gene3D" id="1.10.1760.20">
    <property type="match status" value="1"/>
</dbReference>
<dbReference type="HAMAP" id="MF_01462">
    <property type="entry name" value="CbiM"/>
    <property type="match status" value="1"/>
</dbReference>
<dbReference type="InterPro" id="IPR018024">
    <property type="entry name" value="CbiM"/>
</dbReference>
<dbReference type="InterPro" id="IPR002751">
    <property type="entry name" value="CbiM/NikMN"/>
</dbReference>
<dbReference type="NCBIfam" id="TIGR00123">
    <property type="entry name" value="cbiM"/>
    <property type="match status" value="1"/>
</dbReference>
<dbReference type="NCBIfam" id="NF006184">
    <property type="entry name" value="PRK08319.1"/>
    <property type="match status" value="1"/>
</dbReference>
<dbReference type="PANTHER" id="PTHR43627">
    <property type="match status" value="1"/>
</dbReference>
<dbReference type="PANTHER" id="PTHR43627:SF1">
    <property type="entry name" value="COBALT TRANSPORT PROTEIN CBIM"/>
    <property type="match status" value="1"/>
</dbReference>
<dbReference type="Pfam" id="PF01891">
    <property type="entry name" value="CbiM"/>
    <property type="match status" value="1"/>
</dbReference>
<reference key="1">
    <citation type="submission" date="2007-03" db="EMBL/GenBank/DDBJ databases">
        <title>Complete sequence of Desulfotomaculum reducens MI-1.</title>
        <authorList>
            <consortium name="US DOE Joint Genome Institute"/>
            <person name="Copeland A."/>
            <person name="Lucas S."/>
            <person name="Lapidus A."/>
            <person name="Barry K."/>
            <person name="Detter J.C."/>
            <person name="Glavina del Rio T."/>
            <person name="Hammon N."/>
            <person name="Israni S."/>
            <person name="Dalin E."/>
            <person name="Tice H."/>
            <person name="Pitluck S."/>
            <person name="Sims D."/>
            <person name="Brettin T."/>
            <person name="Bruce D."/>
            <person name="Han C."/>
            <person name="Tapia R."/>
            <person name="Schmutz J."/>
            <person name="Larimer F."/>
            <person name="Land M."/>
            <person name="Hauser L."/>
            <person name="Kyrpides N."/>
            <person name="Kim E."/>
            <person name="Tebo B.M."/>
            <person name="Richardson P."/>
        </authorList>
    </citation>
    <scope>NUCLEOTIDE SEQUENCE [LARGE SCALE GENOMIC DNA]</scope>
    <source>
        <strain>ATCC BAA-1160 / DSM 100696 / MI-1</strain>
    </source>
</reference>
<organism>
    <name type="scientific">Desulforamulus reducens (strain ATCC BAA-1160 / DSM 100696 / MI-1)</name>
    <name type="common">Desulfotomaculum reducens</name>
    <dbReference type="NCBI Taxonomy" id="349161"/>
    <lineage>
        <taxon>Bacteria</taxon>
        <taxon>Bacillati</taxon>
        <taxon>Bacillota</taxon>
        <taxon>Clostridia</taxon>
        <taxon>Eubacteriales</taxon>
        <taxon>Peptococcaceae</taxon>
        <taxon>Desulforamulus</taxon>
    </lineage>
</organism>
<name>CBIM_DESRM</name>
<protein>
    <recommendedName>
        <fullName evidence="1">Cobalt transport protein CbiM</fullName>
    </recommendedName>
    <alternativeName>
        <fullName evidence="1">Energy-coupling factor transporter probable substrate-capture protein CbiM</fullName>
        <shortName evidence="1">ECF transporter S component CbiM</shortName>
    </alternativeName>
</protein>
<accession>A4J832</accession>
<proteinExistence type="inferred from homology"/>
<feature type="signal peptide" evidence="1">
    <location>
        <begin position="1"/>
        <end position="24"/>
    </location>
</feature>
<feature type="chain" id="PRO_5000231537" description="Cobalt transport protein CbiM">
    <location>
        <begin position="25"/>
        <end position="250"/>
    </location>
</feature>
<feature type="transmembrane region" description="Helical" evidence="1">
    <location>
        <begin position="32"/>
        <end position="52"/>
    </location>
</feature>
<feature type="transmembrane region" description="Helical" evidence="1">
    <location>
        <begin position="67"/>
        <end position="87"/>
    </location>
</feature>
<feature type="transmembrane region" description="Helical" evidence="1">
    <location>
        <begin position="99"/>
        <end position="119"/>
    </location>
</feature>
<feature type="transmembrane region" description="Helical" evidence="1">
    <location>
        <begin position="122"/>
        <end position="142"/>
    </location>
</feature>
<feature type="transmembrane region" description="Helical" evidence="1">
    <location>
        <begin position="161"/>
        <end position="181"/>
    </location>
</feature>
<feature type="transmembrane region" description="Helical" evidence="1">
    <location>
        <begin position="203"/>
        <end position="223"/>
    </location>
</feature>
<comment type="function">
    <text evidence="1">Part of the energy-coupling factor (ECF) transporter complex CbiMNOQ involved in cobalt import.</text>
</comment>
<comment type="pathway">
    <text evidence="1">Cofactor biosynthesis; adenosylcobalamin biosynthesis.</text>
</comment>
<comment type="subunit">
    <text evidence="1">Forms an energy-coupling factor (ECF) transporter complex composed of an ATP-binding protein (A component, CbiO), a transmembrane protein (T component, CbiQ) and 2 possible substrate-capture proteins (S components, CbiM and CbiN) of unknown stoichimetry.</text>
</comment>
<comment type="subcellular location">
    <subcellularLocation>
        <location evidence="1">Cell membrane</location>
        <topology evidence="1">Multi-pass membrane protein</topology>
    </subcellularLocation>
</comment>
<comment type="similarity">
    <text evidence="1">Belongs to the CbiM family.</text>
</comment>